<name>RTF1_HUMAN</name>
<comment type="function">
    <text evidence="1 7 8">Component of the PAF1 complex (PAF1C) which has multiple functions during transcription by RNA polymerase II and is implicated in regulation of development and maintenance of embryonic stem cell pluripotency. PAF1C associates with RNA polymerase II through interaction with POLR2A CTD non-phosphorylated and 'Ser-2'- and 'Ser-5'-phosphorylated forms and is involved in transcriptional elongation, acting both independently and synergistically with TCEA1 and in cooperation with the DSIF complex and HTATSF1. PAF1C is required for transcription of Hox and Wnt target genes. PAF1C is involved in hematopoiesis and stimulates transcriptional activity of KMT2A/MLL1; it promotes leukemogenesis through association with KMT2A/MLL1-rearranged oncoproteins, such as KMT2A/MLL1-MLLT3/AF9 and KMT2A/MLL1-MLLT1/ENL. PAF1C is involved in histone modifications such as ubiquitination of histone H2B and methylation on histone H3 'Lys-4' (H3K4me3). PAF1C recruits the RNF20/40 E3 ubiquitin-protein ligase complex and the E2 enzyme UBE2A or UBE2B to chromatin which mediate monoubiquitination of 'Lys-120' of histone H2B (H2BK120ub1); UB2A/B-mediated H2B ubiquitination is proposed to be coupled to transcription. PAF1C is involved in mRNA 3' end formation probably through association with cleavage and poly(A) factors. In case of infection by influenza A strain H3N2, PAF1C associates with viral NS1 protein, thereby regulating gene transcription. Binds single-stranded DNA. Required for maximal induction of heat-shock genes. Required for the trimethylation of histone H3 'Lys-4' (H3K4me3) on genes involved in stem cell pluripotency; this function is synergistic with CXXC1 indicative for an involvement of a SET1 complex (By similarity).</text>
</comment>
<comment type="subunit">
    <text evidence="2 8">Component of the PAF1 complex, which consists of CDC73, PAF1, LEO1, CTR9, RTF1 and SKIC8; the association of RTF1 appears to be less stable than that of other subunits. At least in HeLa cells a N-terminal shorter form of RTF1 is also found in the complex (PubMed:20178742). The PAF1 complex interacts with PHF5A (By similarity).</text>
</comment>
<comment type="interaction">
    <interactant intactId="EBI-1055239">
        <id>Q92541</id>
    </interactant>
    <interactant intactId="EBI-930143">
        <id>Q6P1J9</id>
        <label>CDC73</label>
    </interactant>
    <organismsDiffer>false</organismsDiffer>
    <experiments>12</experiments>
</comment>
<comment type="interaction">
    <interactant intactId="EBI-1055239">
        <id>Q92541</id>
    </interactant>
    <interactant intactId="EBI-2607770">
        <id>Q8N7H5</id>
        <label>PAF1</label>
    </interactant>
    <organismsDiffer>false</organismsDiffer>
    <experiments>17</experiments>
</comment>
<comment type="subcellular location">
    <subcellularLocation>
        <location evidence="1">Nucleus</location>
        <location evidence="1">Nucleoplasm</location>
    </subcellularLocation>
</comment>
<comment type="domain">
    <text evidence="6">The Plus3 domain mediates single-stranded DNA-binding.</text>
</comment>
<comment type="caution">
    <text evidence="9">It is uncertain whether Met-1 or Met-41 is the initiator.</text>
</comment>
<comment type="sequence caution" evidence="9">
    <conflict type="erroneous initiation">
        <sequence resource="EMBL-CDS" id="AAH15052"/>
    </conflict>
    <text>Truncated N-terminus.</text>
</comment>
<comment type="sequence caution" evidence="9">
    <conflict type="erroneous initiation">
        <sequence resource="EMBL-CDS" id="BAA13382"/>
    </conflict>
    <text>Truncated N-terminus.</text>
</comment>
<organism>
    <name type="scientific">Homo sapiens</name>
    <name type="common">Human</name>
    <dbReference type="NCBI Taxonomy" id="9606"/>
    <lineage>
        <taxon>Eukaryota</taxon>
        <taxon>Metazoa</taxon>
        <taxon>Chordata</taxon>
        <taxon>Craniata</taxon>
        <taxon>Vertebrata</taxon>
        <taxon>Euteleostomi</taxon>
        <taxon>Mammalia</taxon>
        <taxon>Eutheria</taxon>
        <taxon>Euarchontoglires</taxon>
        <taxon>Primates</taxon>
        <taxon>Haplorrhini</taxon>
        <taxon>Catarrhini</taxon>
        <taxon>Hominidae</taxon>
        <taxon>Homo</taxon>
    </lineage>
</organism>
<proteinExistence type="evidence at protein level"/>
<dbReference type="EMBL" id="AC087721">
    <property type="status" value="NOT_ANNOTATED_CDS"/>
    <property type="molecule type" value="Genomic_DNA"/>
</dbReference>
<dbReference type="EMBL" id="D87440">
    <property type="protein sequence ID" value="BAA13382.2"/>
    <property type="status" value="ALT_INIT"/>
    <property type="molecule type" value="mRNA"/>
</dbReference>
<dbReference type="EMBL" id="BC015052">
    <property type="protein sequence ID" value="AAH15052.1"/>
    <property type="status" value="ALT_INIT"/>
    <property type="molecule type" value="mRNA"/>
</dbReference>
<dbReference type="CCDS" id="CCDS32200.2"/>
<dbReference type="RefSeq" id="NP_055953.3">
    <property type="nucleotide sequence ID" value="NM_015138.5"/>
</dbReference>
<dbReference type="PDB" id="2BZE">
    <property type="method" value="NMR"/>
    <property type="chains" value="A=353-484"/>
</dbReference>
<dbReference type="PDB" id="2DB9">
    <property type="method" value="NMR"/>
    <property type="chains" value="A=347-482"/>
</dbReference>
<dbReference type="PDB" id="3U1U">
    <property type="method" value="X-ray"/>
    <property type="resolution" value="1.80 A"/>
    <property type="chains" value="A/B=347-482"/>
</dbReference>
<dbReference type="PDB" id="4L1P">
    <property type="method" value="X-ray"/>
    <property type="resolution" value="2.12 A"/>
    <property type="chains" value="A/B=353-484"/>
</dbReference>
<dbReference type="PDB" id="4L1U">
    <property type="method" value="X-ray"/>
    <property type="resolution" value="2.42 A"/>
    <property type="chains" value="A/B/C/D/E/F=353-484"/>
</dbReference>
<dbReference type="PDB" id="6TED">
    <property type="method" value="EM"/>
    <property type="resolution" value="3.10 A"/>
    <property type="chains" value="R=1-710"/>
</dbReference>
<dbReference type="PDB" id="7UNC">
    <property type="method" value="EM"/>
    <property type="resolution" value="3.00 A"/>
    <property type="chains" value="R=1-710"/>
</dbReference>
<dbReference type="PDB" id="7UND">
    <property type="method" value="EM"/>
    <property type="resolution" value="3.00 A"/>
    <property type="chains" value="R=1-710"/>
</dbReference>
<dbReference type="PDB" id="8A3Y">
    <property type="method" value="EM"/>
    <property type="resolution" value="3.30 A"/>
    <property type="chains" value="R=353-600"/>
</dbReference>
<dbReference type="PDB" id="9EGX">
    <property type="method" value="EM"/>
    <property type="resolution" value="2.90 A"/>
    <property type="chains" value="R=1-710"/>
</dbReference>
<dbReference type="PDB" id="9EGY">
    <property type="method" value="EM"/>
    <property type="resolution" value="2.90 A"/>
    <property type="chains" value="R=1-710"/>
</dbReference>
<dbReference type="PDB" id="9EGZ">
    <property type="method" value="EM"/>
    <property type="resolution" value="2.90 A"/>
    <property type="chains" value="R=1-710"/>
</dbReference>
<dbReference type="PDB" id="9EH0">
    <property type="method" value="EM"/>
    <property type="resolution" value="3.60 A"/>
    <property type="chains" value="R=1-710"/>
</dbReference>
<dbReference type="PDB" id="9EH1">
    <property type="method" value="EM"/>
    <property type="resolution" value="3.10 A"/>
    <property type="chains" value="R=353-600"/>
</dbReference>
<dbReference type="PDB" id="9EH2">
    <property type="method" value="EM"/>
    <property type="resolution" value="3.10 A"/>
    <property type="chains" value="R=1-710"/>
</dbReference>
<dbReference type="PDBsum" id="2BZE"/>
<dbReference type="PDBsum" id="2DB9"/>
<dbReference type="PDBsum" id="3U1U"/>
<dbReference type="PDBsum" id="4L1P"/>
<dbReference type="PDBsum" id="4L1U"/>
<dbReference type="PDBsum" id="6TED"/>
<dbReference type="PDBsum" id="7UNC"/>
<dbReference type="PDBsum" id="7UND"/>
<dbReference type="PDBsum" id="8A3Y"/>
<dbReference type="PDBsum" id="9EGX"/>
<dbReference type="PDBsum" id="9EGY"/>
<dbReference type="PDBsum" id="9EGZ"/>
<dbReference type="PDBsum" id="9EH0"/>
<dbReference type="PDBsum" id="9EH1"/>
<dbReference type="PDBsum" id="9EH2"/>
<dbReference type="BMRB" id="Q92541"/>
<dbReference type="EMDB" id="EMD-10480"/>
<dbReference type="EMDB" id="EMD-15127"/>
<dbReference type="EMDB" id="EMD-26620"/>
<dbReference type="EMDB" id="EMD-26621"/>
<dbReference type="EMDB" id="EMD-48039"/>
<dbReference type="EMDB" id="EMD-48040"/>
<dbReference type="EMDB" id="EMD-48041"/>
<dbReference type="EMDB" id="EMD-48042"/>
<dbReference type="EMDB" id="EMD-48043"/>
<dbReference type="EMDB" id="EMD-48044"/>
<dbReference type="SMR" id="Q92541"/>
<dbReference type="BioGRID" id="116780">
    <property type="interactions" value="169"/>
</dbReference>
<dbReference type="ComplexPortal" id="CPX-2381">
    <property type="entry name" value="PAF1 complex"/>
</dbReference>
<dbReference type="FunCoup" id="Q92541">
    <property type="interactions" value="3071"/>
</dbReference>
<dbReference type="IntAct" id="Q92541">
    <property type="interactions" value="53"/>
</dbReference>
<dbReference type="MINT" id="Q92541"/>
<dbReference type="STRING" id="9606.ENSP00000374280"/>
<dbReference type="GlyCosmos" id="Q92541">
    <property type="glycosylation" value="1 site, 1 glycan"/>
</dbReference>
<dbReference type="GlyGen" id="Q92541">
    <property type="glycosylation" value="3 sites, 1 O-linked glycan (3 sites)"/>
</dbReference>
<dbReference type="iPTMnet" id="Q92541"/>
<dbReference type="MetOSite" id="Q92541"/>
<dbReference type="PhosphoSitePlus" id="Q92541"/>
<dbReference type="BioMuta" id="RTF1"/>
<dbReference type="DMDM" id="313104316"/>
<dbReference type="CPTAC" id="CPTAC-5925"/>
<dbReference type="CPTAC" id="CPTAC-5926"/>
<dbReference type="jPOST" id="Q92541"/>
<dbReference type="MassIVE" id="Q92541"/>
<dbReference type="PaxDb" id="9606-ENSP00000374280"/>
<dbReference type="PeptideAtlas" id="Q92541"/>
<dbReference type="ProteomicsDB" id="75301"/>
<dbReference type="Pumba" id="Q92541"/>
<dbReference type="Antibodypedia" id="1858">
    <property type="antibodies" value="234 antibodies from 29 providers"/>
</dbReference>
<dbReference type="CPTC" id="Q92541">
    <property type="antibodies" value="2 antibodies"/>
</dbReference>
<dbReference type="DNASU" id="23168"/>
<dbReference type="Ensembl" id="ENST00000389629.9">
    <property type="protein sequence ID" value="ENSP00000374280.4"/>
    <property type="gene ID" value="ENSG00000137815.15"/>
</dbReference>
<dbReference type="GeneID" id="23168"/>
<dbReference type="KEGG" id="hsa:23168"/>
<dbReference type="MANE-Select" id="ENST00000389629.9">
    <property type="protein sequence ID" value="ENSP00000374280.4"/>
    <property type="RefSeq nucleotide sequence ID" value="NM_015138.5"/>
    <property type="RefSeq protein sequence ID" value="NP_055953.3"/>
</dbReference>
<dbReference type="UCSC" id="uc001zny.3">
    <property type="organism name" value="human"/>
</dbReference>
<dbReference type="AGR" id="HGNC:28996"/>
<dbReference type="CTD" id="23168"/>
<dbReference type="DisGeNET" id="23168"/>
<dbReference type="GeneCards" id="RTF1"/>
<dbReference type="HGNC" id="HGNC:28996">
    <property type="gene designation" value="RTF1"/>
</dbReference>
<dbReference type="HPA" id="ENSG00000137815">
    <property type="expression patterns" value="Low tissue specificity"/>
</dbReference>
<dbReference type="MIM" id="611633">
    <property type="type" value="gene"/>
</dbReference>
<dbReference type="neXtProt" id="NX_Q92541"/>
<dbReference type="OpenTargets" id="ENSG00000137815"/>
<dbReference type="PharmGKB" id="PA134961778"/>
<dbReference type="VEuPathDB" id="HostDB:ENSG00000137815"/>
<dbReference type="eggNOG" id="KOG2402">
    <property type="taxonomic scope" value="Eukaryota"/>
</dbReference>
<dbReference type="GeneTree" id="ENSGT00390000012493"/>
<dbReference type="HOGENOM" id="CLU_018644_0_1_1"/>
<dbReference type="InParanoid" id="Q92541"/>
<dbReference type="OMA" id="ISGCYAR"/>
<dbReference type="OrthoDB" id="166375at2759"/>
<dbReference type="PAN-GO" id="Q92541">
    <property type="GO annotations" value="2 GO annotations based on evolutionary models"/>
</dbReference>
<dbReference type="PhylomeDB" id="Q92541"/>
<dbReference type="TreeFam" id="TF321360"/>
<dbReference type="PathwayCommons" id="Q92541"/>
<dbReference type="Reactome" id="R-HSA-112382">
    <property type="pathway name" value="Formation of RNA Pol II elongation complex"/>
</dbReference>
<dbReference type="Reactome" id="R-HSA-674695">
    <property type="pathway name" value="RNA Polymerase II Pre-transcription Events"/>
</dbReference>
<dbReference type="Reactome" id="R-HSA-75955">
    <property type="pathway name" value="RNA Polymerase II Transcription Elongation"/>
</dbReference>
<dbReference type="Reactome" id="R-HSA-8866654">
    <property type="pathway name" value="E3 ubiquitin ligases ubiquitinate target proteins"/>
</dbReference>
<dbReference type="SignaLink" id="Q92541"/>
<dbReference type="SIGNOR" id="Q92541"/>
<dbReference type="BioGRID-ORCS" id="23168">
    <property type="hits" value="618 hits in 1166 CRISPR screens"/>
</dbReference>
<dbReference type="ChiTaRS" id="RTF1">
    <property type="organism name" value="human"/>
</dbReference>
<dbReference type="EvolutionaryTrace" id="Q92541"/>
<dbReference type="GeneWiki" id="RTF1"/>
<dbReference type="GenomeRNAi" id="23168"/>
<dbReference type="Pharos" id="Q92541">
    <property type="development level" value="Tbio"/>
</dbReference>
<dbReference type="PRO" id="PR:Q92541"/>
<dbReference type="Proteomes" id="UP000005640">
    <property type="component" value="Chromosome 15"/>
</dbReference>
<dbReference type="RNAct" id="Q92541">
    <property type="molecule type" value="protein"/>
</dbReference>
<dbReference type="Bgee" id="ENSG00000137815">
    <property type="expression patterns" value="Expressed in cortical plate and 215 other cell types or tissues"/>
</dbReference>
<dbReference type="ExpressionAtlas" id="Q92541">
    <property type="expression patterns" value="baseline and differential"/>
</dbReference>
<dbReference type="GO" id="GO:0016593">
    <property type="term" value="C:Cdc73/Paf1 complex"/>
    <property type="evidence" value="ECO:0000314"/>
    <property type="project" value="UniProtKB"/>
</dbReference>
<dbReference type="GO" id="GO:0005730">
    <property type="term" value="C:nucleolus"/>
    <property type="evidence" value="ECO:0007669"/>
    <property type="project" value="Ensembl"/>
</dbReference>
<dbReference type="GO" id="GO:0005654">
    <property type="term" value="C:nucleoplasm"/>
    <property type="evidence" value="ECO:0000304"/>
    <property type="project" value="Reactome"/>
</dbReference>
<dbReference type="GO" id="GO:0003723">
    <property type="term" value="F:RNA binding"/>
    <property type="evidence" value="ECO:0007005"/>
    <property type="project" value="UniProtKB"/>
</dbReference>
<dbReference type="GO" id="GO:0003697">
    <property type="term" value="F:single-stranded DNA binding"/>
    <property type="evidence" value="ECO:0000314"/>
    <property type="project" value="UniProtKB"/>
</dbReference>
<dbReference type="GO" id="GO:0001832">
    <property type="term" value="P:blastocyst growth"/>
    <property type="evidence" value="ECO:0007669"/>
    <property type="project" value="Ensembl"/>
</dbReference>
<dbReference type="GO" id="GO:0006325">
    <property type="term" value="P:chromatin organization"/>
    <property type="evidence" value="ECO:0007669"/>
    <property type="project" value="Ensembl"/>
</dbReference>
<dbReference type="GO" id="GO:0001711">
    <property type="term" value="P:endodermal cell fate commitment"/>
    <property type="evidence" value="ECO:0000250"/>
    <property type="project" value="UniProtKB"/>
</dbReference>
<dbReference type="GO" id="GO:0000122">
    <property type="term" value="P:negative regulation of transcription by RNA polymerase II"/>
    <property type="evidence" value="ECO:0000250"/>
    <property type="project" value="UniProtKB"/>
</dbReference>
<dbReference type="GO" id="GO:0019827">
    <property type="term" value="P:stem cell population maintenance"/>
    <property type="evidence" value="ECO:0000314"/>
    <property type="project" value="UniProtKB"/>
</dbReference>
<dbReference type="GO" id="GO:0006368">
    <property type="term" value="P:transcription elongation by RNA polymerase II"/>
    <property type="evidence" value="ECO:0000314"/>
    <property type="project" value="GO_Central"/>
</dbReference>
<dbReference type="GO" id="GO:0016055">
    <property type="term" value="P:Wnt signaling pathway"/>
    <property type="evidence" value="ECO:0007669"/>
    <property type="project" value="UniProtKB-KW"/>
</dbReference>
<dbReference type="FunFam" id="3.90.70.200:FF:000001">
    <property type="entry name" value="RNA polymerase-associated protein RTF1 homolog"/>
    <property type="match status" value="1"/>
</dbReference>
<dbReference type="Gene3D" id="3.90.70.200">
    <property type="entry name" value="Plus-3 domain"/>
    <property type="match status" value="1"/>
</dbReference>
<dbReference type="InterPro" id="IPR004343">
    <property type="entry name" value="Plus-3_dom"/>
</dbReference>
<dbReference type="InterPro" id="IPR036128">
    <property type="entry name" value="Plus3-like_sf"/>
</dbReference>
<dbReference type="PANTHER" id="PTHR13115">
    <property type="entry name" value="RNA POLYMERASE-ASSOCIATED PROTEIN RTF1 HOMOLOG"/>
    <property type="match status" value="1"/>
</dbReference>
<dbReference type="PANTHER" id="PTHR13115:SF8">
    <property type="entry name" value="RNA POLYMERASE-ASSOCIATED PROTEIN RTF1 HOMOLOG"/>
    <property type="match status" value="1"/>
</dbReference>
<dbReference type="Pfam" id="PF03126">
    <property type="entry name" value="Plus-3"/>
    <property type="match status" value="1"/>
</dbReference>
<dbReference type="SMART" id="SM00719">
    <property type="entry name" value="Plus3"/>
    <property type="match status" value="1"/>
</dbReference>
<dbReference type="SUPFAM" id="SSF159042">
    <property type="entry name" value="Plus3-like"/>
    <property type="match status" value="1"/>
</dbReference>
<dbReference type="PROSITE" id="PS51360">
    <property type="entry name" value="PLUS3"/>
    <property type="match status" value="1"/>
</dbReference>
<protein>
    <recommendedName>
        <fullName>RNA polymerase-associated protein RTF1 homolog</fullName>
    </recommendedName>
</protein>
<reference key="1">
    <citation type="journal article" date="2006" name="Nature">
        <title>Analysis of the DNA sequence and duplication history of human chromosome 15.</title>
        <authorList>
            <person name="Zody M.C."/>
            <person name="Garber M."/>
            <person name="Sharpe T."/>
            <person name="Young S.K."/>
            <person name="Rowen L."/>
            <person name="O'Neill K."/>
            <person name="Whittaker C.A."/>
            <person name="Kamal M."/>
            <person name="Chang J.L."/>
            <person name="Cuomo C.A."/>
            <person name="Dewar K."/>
            <person name="FitzGerald M.G."/>
            <person name="Kodira C.D."/>
            <person name="Madan A."/>
            <person name="Qin S."/>
            <person name="Yang X."/>
            <person name="Abbasi N."/>
            <person name="Abouelleil A."/>
            <person name="Arachchi H.M."/>
            <person name="Baradarani L."/>
            <person name="Birditt B."/>
            <person name="Bloom S."/>
            <person name="Bloom T."/>
            <person name="Borowsky M.L."/>
            <person name="Burke J."/>
            <person name="Butler J."/>
            <person name="Cook A."/>
            <person name="DeArellano K."/>
            <person name="DeCaprio D."/>
            <person name="Dorris L. III"/>
            <person name="Dors M."/>
            <person name="Eichler E.E."/>
            <person name="Engels R."/>
            <person name="Fahey J."/>
            <person name="Fleetwood P."/>
            <person name="Friedman C."/>
            <person name="Gearin G."/>
            <person name="Hall J.L."/>
            <person name="Hensley G."/>
            <person name="Johnson E."/>
            <person name="Jones C."/>
            <person name="Kamat A."/>
            <person name="Kaur A."/>
            <person name="Locke D.P."/>
            <person name="Madan A."/>
            <person name="Munson G."/>
            <person name="Jaffe D.B."/>
            <person name="Lui A."/>
            <person name="Macdonald P."/>
            <person name="Mauceli E."/>
            <person name="Naylor J.W."/>
            <person name="Nesbitt R."/>
            <person name="Nicol R."/>
            <person name="O'Leary S.B."/>
            <person name="Ratcliffe A."/>
            <person name="Rounsley S."/>
            <person name="She X."/>
            <person name="Sneddon K.M.B."/>
            <person name="Stewart S."/>
            <person name="Sougnez C."/>
            <person name="Stone S.M."/>
            <person name="Topham K."/>
            <person name="Vincent D."/>
            <person name="Wang S."/>
            <person name="Zimmer A.R."/>
            <person name="Birren B.W."/>
            <person name="Hood L."/>
            <person name="Lander E.S."/>
            <person name="Nusbaum C."/>
        </authorList>
    </citation>
    <scope>NUCLEOTIDE SEQUENCE [LARGE SCALE GENOMIC DNA]</scope>
</reference>
<reference key="2">
    <citation type="journal article" date="1996" name="DNA Res.">
        <title>Prediction of the coding sequences of unidentified human genes. VI. The coding sequences of 80 new genes (KIAA0201-KIAA0280) deduced by analysis of cDNA clones from cell line KG-1 and brain.</title>
        <authorList>
            <person name="Nagase T."/>
            <person name="Seki N."/>
            <person name="Ishikawa K."/>
            <person name="Ohira M."/>
            <person name="Kawarabayasi Y."/>
            <person name="Ohara O."/>
            <person name="Tanaka A."/>
            <person name="Kotani H."/>
            <person name="Miyajima N."/>
            <person name="Nomura N."/>
        </authorList>
    </citation>
    <scope>NUCLEOTIDE SEQUENCE [LARGE SCALE MRNA] OF 9-710</scope>
    <source>
        <tissue>Brain</tissue>
    </source>
</reference>
<reference key="3">
    <citation type="journal article" date="2002" name="DNA Res.">
        <title>Construction of expression-ready cDNA clones for KIAA genes: manual curation of 330 KIAA cDNA clones.</title>
        <authorList>
            <person name="Nakajima D."/>
            <person name="Okazaki N."/>
            <person name="Yamakawa H."/>
            <person name="Kikuno R."/>
            <person name="Ohara O."/>
            <person name="Nagase T."/>
        </authorList>
    </citation>
    <scope>SEQUENCE REVISION</scope>
</reference>
<reference key="4">
    <citation type="journal article" date="2004" name="Genome Res.">
        <title>The status, quality, and expansion of the NIH full-length cDNA project: the Mammalian Gene Collection (MGC).</title>
        <authorList>
            <consortium name="The MGC Project Team"/>
        </authorList>
    </citation>
    <scope>NUCLEOTIDE SEQUENCE [LARGE SCALE MRNA] OF 14-710</scope>
    <source>
        <tissue>Uterus</tissue>
    </source>
</reference>
<reference key="5">
    <citation type="journal article" date="2006" name="Cell">
        <title>Global, in vivo, and site-specific phosphorylation dynamics in signaling networks.</title>
        <authorList>
            <person name="Olsen J.V."/>
            <person name="Blagoev B."/>
            <person name="Gnad F."/>
            <person name="Macek B."/>
            <person name="Kumar C."/>
            <person name="Mortensen P."/>
            <person name="Mann M."/>
        </authorList>
    </citation>
    <scope>IDENTIFICATION BY MASS SPECTROMETRY [LARGE SCALE ANALYSIS]</scope>
    <source>
        <tissue>Cervix carcinoma</tissue>
    </source>
</reference>
<reference key="6">
    <citation type="journal article" date="2008" name="Proc. Natl. Acad. Sci. U.S.A.">
        <title>A quantitative atlas of mitotic phosphorylation.</title>
        <authorList>
            <person name="Dephoure N."/>
            <person name="Zhou C."/>
            <person name="Villen J."/>
            <person name="Beausoleil S.A."/>
            <person name="Bakalarski C.E."/>
            <person name="Elledge S.J."/>
            <person name="Gygi S.P."/>
        </authorList>
    </citation>
    <scope>PHOSPHORYLATION [LARGE SCALE ANALYSIS] AT SER-697</scope>
    <scope>IDENTIFICATION BY MASS SPECTROMETRY [LARGE SCALE ANALYSIS]</scope>
    <source>
        <tissue>Cervix carcinoma</tissue>
    </source>
</reference>
<reference key="7">
    <citation type="journal article" date="2009" name="Cell Stem Cell">
        <title>A genome-scale RNAi screen for Oct4 modulators defines a role of the Paf1 complex for embryonic stem cell identity.</title>
        <authorList>
            <person name="Ding L."/>
            <person name="Paszkowski-Rogacz M."/>
            <person name="Nitzsche A."/>
            <person name="Slabicki M.M."/>
            <person name="Heninger A.K."/>
            <person name="de Vries I."/>
            <person name="Kittler R."/>
            <person name="Junqueira M."/>
            <person name="Shevchenko A."/>
            <person name="Schulz H."/>
            <person name="Hubner N."/>
            <person name="Doss M.X."/>
            <person name="Sachinidis A."/>
            <person name="Hescheler J."/>
            <person name="Iacone R."/>
            <person name="Anastassiadis K."/>
            <person name="Stewart A.F."/>
            <person name="Pisabarro M.T."/>
            <person name="Caldarelli A."/>
            <person name="Poser I."/>
            <person name="Theis M."/>
            <person name="Buchholz F."/>
        </authorList>
    </citation>
    <scope>FUNCTION</scope>
</reference>
<reference key="8">
    <citation type="journal article" date="2010" name="Cell">
        <title>The human PAF1 complex acts in chromatin transcription elongation both independently and cooperatively with SII/TFIIS.</title>
        <authorList>
            <person name="Kim J."/>
            <person name="Guermah M."/>
            <person name="Roeder R.G."/>
        </authorList>
    </citation>
    <scope>IDENTIFICATION IN THE PAF1 COMPLEX</scope>
    <scope>COMPOSITION OF THE PAF1 COMPLEX</scope>
    <scope>FUNCTION OF THE PAF1 COMPLEX</scope>
</reference>
<reference key="9">
    <citation type="journal article" date="2010" name="Sci. Signal.">
        <title>Quantitative phosphoproteomics reveals widespread full phosphorylation site occupancy during mitosis.</title>
        <authorList>
            <person name="Olsen J.V."/>
            <person name="Vermeulen M."/>
            <person name="Santamaria A."/>
            <person name="Kumar C."/>
            <person name="Miller M.L."/>
            <person name="Jensen L.J."/>
            <person name="Gnad F."/>
            <person name="Cox J."/>
            <person name="Jensen T.S."/>
            <person name="Nigg E.A."/>
            <person name="Brunak S."/>
            <person name="Mann M."/>
        </authorList>
    </citation>
    <scope>PHOSPHORYLATION [LARGE SCALE ANALYSIS] AT SER-53; SER-650 AND SER-697</scope>
    <scope>IDENTIFICATION BY MASS SPECTROMETRY [LARGE SCALE ANALYSIS]</scope>
    <source>
        <tissue>Cervix carcinoma</tissue>
    </source>
</reference>
<reference key="10">
    <citation type="journal article" date="2011" name="BMC Syst. Biol.">
        <title>Initial characterization of the human central proteome.</title>
        <authorList>
            <person name="Burkard T.R."/>
            <person name="Planyavsky M."/>
            <person name="Kaupe I."/>
            <person name="Breitwieser F.P."/>
            <person name="Buerckstuemmer T."/>
            <person name="Bennett K.L."/>
            <person name="Superti-Furga G."/>
            <person name="Colinge J."/>
        </authorList>
    </citation>
    <scope>IDENTIFICATION BY MASS SPECTROMETRY [LARGE SCALE ANALYSIS]</scope>
</reference>
<reference key="11">
    <citation type="journal article" date="2011" name="Sci. Signal.">
        <title>System-wide temporal characterization of the proteome and phosphoproteome of human embryonic stem cell differentiation.</title>
        <authorList>
            <person name="Rigbolt K.T."/>
            <person name="Prokhorova T.A."/>
            <person name="Akimov V."/>
            <person name="Henningsen J."/>
            <person name="Johansen P.T."/>
            <person name="Kratchmarova I."/>
            <person name="Kassem M."/>
            <person name="Mann M."/>
            <person name="Olsen J.V."/>
            <person name="Blagoev B."/>
        </authorList>
    </citation>
    <scope>PHOSPHORYLATION [LARGE SCALE ANALYSIS] AT SER-53 AND THR-55</scope>
    <scope>IDENTIFICATION BY MASS SPECTROMETRY [LARGE SCALE ANALYSIS]</scope>
</reference>
<reference key="12">
    <citation type="journal article" date="2013" name="J. Proteome Res.">
        <title>Toward a comprehensive characterization of a human cancer cell phosphoproteome.</title>
        <authorList>
            <person name="Zhou H."/>
            <person name="Di Palma S."/>
            <person name="Preisinger C."/>
            <person name="Peng M."/>
            <person name="Polat A.N."/>
            <person name="Heck A.J."/>
            <person name="Mohammed S."/>
        </authorList>
    </citation>
    <scope>PHOSPHORYLATION [LARGE SCALE ANALYSIS] AT SER-626; SER-650; SER-655 AND SER-697</scope>
    <scope>IDENTIFICATION BY MASS SPECTROMETRY [LARGE SCALE ANALYSIS]</scope>
    <source>
        <tissue>Cervix carcinoma</tissue>
        <tissue>Erythroleukemia</tissue>
    </source>
</reference>
<reference key="13">
    <citation type="submission" date="2006-06" db="PDB data bank">
        <title>Solution structure of the plus-3 domain of human KIAA0252 protein.</title>
        <authorList>
            <consortium name="RIKEN structural genomics initiative (RSGI)"/>
        </authorList>
    </citation>
    <scope>STRUCTURE BY NMR OF 347-482</scope>
</reference>
<reference key="14">
    <citation type="journal article" date="2008" name="Structure">
        <title>Structure and DNA binding of the human Rtf1 Plus3 domain.</title>
        <authorList>
            <person name="de Jong R.N."/>
            <person name="Truffault V."/>
            <person name="Diercks T."/>
            <person name="Ab E."/>
            <person name="Daniels M.A."/>
            <person name="Kaptein R."/>
            <person name="Folkers G.E."/>
        </authorList>
    </citation>
    <scope>STRUCTURE BY NMR OF 353-484</scope>
    <scope>DOMAIN PLUS3</scope>
    <scope>DNA-BINDING</scope>
    <scope>MUTAGENESIS OF ARG-401; GLU-410; ARG-429; GLN-434 AND ARG-435</scope>
</reference>
<gene>
    <name type="primary">RTF1</name>
    <name type="synonym">KIAA0252</name>
</gene>
<accession>Q92541</accession>
<accession>Q96BX6</accession>
<sequence length="710" mass="80313">MRGRLCVGRAAAAAAAVAVPLAGGQEGSPGGGRRGSRGTTMVKKRKGRVVIDSDTEDSGSDENLDQELLSLAKRKRSDSEEKEPPVSQPAASSDSETSDSDDEWTFGSNKNKKKGKARKIEKKGTMKKQANKTASSGSSDKDSSAESSAPEEGEVSDSDSNSSSSSSDSDSSSEDEEFHDGYGEDLMGDEEDRARLEQMTEKEREQELFNRIEKREVLKRRFEIKKKLKTAKKKEKKEKKKKQEEEQEKKKLTQIQESQVTSHNKERRSKRDEKLDKKSQAMEELKAEREKRKNRTAELLAKKQPLKTSEVYSDDEEEEEDDKSSEKSDRSSRTSSSDEEEEKEEIPPKSQPVSLPEELNRVRLSRHKLERWCHMPFFAKTVTGCFVRIGIGNHNSKPVYRVAEITGVVETAKVYQLGGTRTNKGLQLRHGNDQRVFRLEFVSNQEFTESEFMKWKEAMFSAGMQLPTLDEINKKELSIKEALNYKFNDQDIEEIVKEKERFRKAPPNYAMKKTQLLKEKAMAEDLGDQDKAKQIQDQLNELEERAEALDRQRTKNISAISYINQRNREWNIVESEKALVAESHNMKNQQMDPFTRRQCKPTIVSNSRDPAVQAAILAQLNAKYGSGVLPDAPKEMSKGQGKDKDLNSKSASDLSEDLFKVHDFDVKIDLQVPSSESKALAITSKAPPAKDGAPRRSLNLEDYKKRRGLI</sequence>
<feature type="chain" id="PRO_0000255936" description="RNA polymerase-associated protein RTF1 homolog">
    <location>
        <begin position="1"/>
        <end position="710"/>
    </location>
</feature>
<feature type="domain" description="Plus3" evidence="4">
    <location>
        <begin position="353"/>
        <end position="484"/>
    </location>
</feature>
<feature type="region of interest" description="Disordered" evidence="5">
    <location>
        <begin position="20"/>
        <end position="214"/>
    </location>
</feature>
<feature type="region of interest" description="Disordered" evidence="5">
    <location>
        <begin position="228"/>
        <end position="357"/>
    </location>
</feature>
<feature type="region of interest" description="Disordered" evidence="5">
    <location>
        <begin position="627"/>
        <end position="650"/>
    </location>
</feature>
<feature type="region of interest" description="Disordered" evidence="5">
    <location>
        <begin position="674"/>
        <end position="710"/>
    </location>
</feature>
<feature type="coiled-coil region" evidence="3">
    <location>
        <begin position="526"/>
        <end position="560"/>
    </location>
</feature>
<feature type="compositionally biased region" description="Gly residues" evidence="5">
    <location>
        <begin position="24"/>
        <end position="33"/>
    </location>
</feature>
<feature type="compositionally biased region" description="Acidic residues" evidence="5">
    <location>
        <begin position="53"/>
        <end position="65"/>
    </location>
</feature>
<feature type="compositionally biased region" description="Basic residues" evidence="5">
    <location>
        <begin position="110"/>
        <end position="130"/>
    </location>
</feature>
<feature type="compositionally biased region" description="Low complexity" evidence="5">
    <location>
        <begin position="158"/>
        <end position="170"/>
    </location>
</feature>
<feature type="compositionally biased region" description="Basic and acidic residues" evidence="5">
    <location>
        <begin position="192"/>
        <end position="214"/>
    </location>
</feature>
<feature type="compositionally biased region" description="Basic residues" evidence="5">
    <location>
        <begin position="228"/>
        <end position="240"/>
    </location>
</feature>
<feature type="compositionally biased region" description="Basic and acidic residues" evidence="5">
    <location>
        <begin position="241"/>
        <end position="251"/>
    </location>
</feature>
<feature type="compositionally biased region" description="Basic and acidic residues" evidence="5">
    <location>
        <begin position="269"/>
        <end position="291"/>
    </location>
</feature>
<feature type="compositionally biased region" description="Acidic residues" evidence="5">
    <location>
        <begin position="312"/>
        <end position="323"/>
    </location>
</feature>
<feature type="compositionally biased region" description="Basic and acidic residues" evidence="5">
    <location>
        <begin position="632"/>
        <end position="647"/>
    </location>
</feature>
<feature type="compositionally biased region" description="Basic and acidic residues" evidence="5">
    <location>
        <begin position="692"/>
        <end position="704"/>
    </location>
</feature>
<feature type="modified residue" description="Phosphoserine" evidence="11 12">
    <location>
        <position position="53"/>
    </location>
</feature>
<feature type="modified residue" description="Phosphothreonine" evidence="12">
    <location>
        <position position="55"/>
    </location>
</feature>
<feature type="modified residue" description="Phosphoserine" evidence="13">
    <location>
        <position position="626"/>
    </location>
</feature>
<feature type="modified residue" description="Phosphoserine" evidence="11 13">
    <location>
        <position position="650"/>
    </location>
</feature>
<feature type="modified residue" description="Phosphoserine" evidence="13">
    <location>
        <position position="655"/>
    </location>
</feature>
<feature type="modified residue" description="Phosphoserine" evidence="10 11 13">
    <location>
        <position position="697"/>
    </location>
</feature>
<feature type="mutagenesis site" description="Loss of binding to single-stranded DNA." evidence="6">
    <original>R</original>
    <variation>E</variation>
    <location>
        <position position="401"/>
    </location>
</feature>
<feature type="mutagenesis site" description="Reduced binding to single-stranded DNA." evidence="6">
    <original>E</original>
    <variation>K</variation>
    <location>
        <position position="410"/>
    </location>
</feature>
<feature type="mutagenesis site" description="Loss of binding to single-stranded DNA." evidence="6">
    <original>R</original>
    <variation>E</variation>
    <location>
        <position position="429"/>
    </location>
</feature>
<feature type="mutagenesis site" description="Reduced binding to single-stranded DNA." evidence="6">
    <original>Q</original>
    <variation>A</variation>
    <location>
        <position position="434"/>
    </location>
</feature>
<feature type="mutagenesis site" description="Loss of binding to single-stranded DNA." evidence="6">
    <original>R</original>
    <variation>E</variation>
    <location>
        <position position="435"/>
    </location>
</feature>
<feature type="helix" evidence="15">
    <location>
        <begin position="356"/>
        <end position="360"/>
    </location>
</feature>
<feature type="strand" evidence="16">
    <location>
        <begin position="362"/>
        <end position="364"/>
    </location>
</feature>
<feature type="helix" evidence="15">
    <location>
        <begin position="366"/>
        <end position="372"/>
    </location>
</feature>
<feature type="strand" evidence="14">
    <location>
        <begin position="373"/>
        <end position="377"/>
    </location>
</feature>
<feature type="helix" evidence="15">
    <location>
        <begin position="378"/>
        <end position="382"/>
    </location>
</feature>
<feature type="strand" evidence="15">
    <location>
        <begin position="386"/>
        <end position="392"/>
    </location>
</feature>
<feature type="strand" evidence="14">
    <location>
        <begin position="395"/>
        <end position="397"/>
    </location>
</feature>
<feature type="strand" evidence="15">
    <location>
        <begin position="399"/>
        <end position="417"/>
    </location>
</feature>
<feature type="strand" evidence="15">
    <location>
        <begin position="420"/>
        <end position="430"/>
    </location>
</feature>
<feature type="strand" evidence="15">
    <location>
        <begin position="433"/>
        <end position="438"/>
    </location>
</feature>
<feature type="helix" evidence="15">
    <location>
        <begin position="439"/>
        <end position="441"/>
    </location>
</feature>
<feature type="helix" evidence="15">
    <location>
        <begin position="449"/>
        <end position="462"/>
    </location>
</feature>
<feature type="helix" evidence="15">
    <location>
        <begin position="469"/>
        <end position="478"/>
    </location>
</feature>
<feature type="helix" evidence="16">
    <location>
        <begin position="491"/>
        <end position="502"/>
    </location>
</feature>
<feature type="strand" evidence="16">
    <location>
        <begin position="505"/>
        <end position="508"/>
    </location>
</feature>
<feature type="helix" evidence="16">
    <location>
        <begin position="511"/>
        <end position="523"/>
    </location>
</feature>
<feature type="helix" evidence="16">
    <location>
        <begin position="528"/>
        <end position="552"/>
    </location>
</feature>
<feature type="turn" evidence="16">
    <location>
        <begin position="553"/>
        <end position="557"/>
    </location>
</feature>
<feature type="helix" evidence="16">
    <location>
        <begin position="558"/>
        <end position="584"/>
    </location>
</feature>
<keyword id="KW-0002">3D-structure</keyword>
<keyword id="KW-0010">Activator</keyword>
<keyword id="KW-0175">Coiled coil</keyword>
<keyword id="KW-0238">DNA-binding</keyword>
<keyword id="KW-0539">Nucleus</keyword>
<keyword id="KW-0597">Phosphoprotein</keyword>
<keyword id="KW-1267">Proteomics identification</keyword>
<keyword id="KW-1185">Reference proteome</keyword>
<keyword id="KW-0804">Transcription</keyword>
<keyword id="KW-0805">Transcription regulation</keyword>
<keyword id="KW-0879">Wnt signaling pathway</keyword>
<evidence type="ECO:0000250" key="1"/>
<evidence type="ECO:0000250" key="2">
    <source>
        <dbReference type="UniProtKB" id="A2AQ19"/>
    </source>
</evidence>
<evidence type="ECO:0000255" key="3"/>
<evidence type="ECO:0000255" key="4">
    <source>
        <dbReference type="PROSITE-ProRule" id="PRU00693"/>
    </source>
</evidence>
<evidence type="ECO:0000256" key="5">
    <source>
        <dbReference type="SAM" id="MobiDB-lite"/>
    </source>
</evidence>
<evidence type="ECO:0000269" key="6">
    <source>
    </source>
</evidence>
<evidence type="ECO:0000269" key="7">
    <source>
    </source>
</evidence>
<evidence type="ECO:0000269" key="8">
    <source>
    </source>
</evidence>
<evidence type="ECO:0000305" key="9"/>
<evidence type="ECO:0007744" key="10">
    <source>
    </source>
</evidence>
<evidence type="ECO:0007744" key="11">
    <source>
    </source>
</evidence>
<evidence type="ECO:0007744" key="12">
    <source>
    </source>
</evidence>
<evidence type="ECO:0007744" key="13">
    <source>
    </source>
</evidence>
<evidence type="ECO:0007829" key="14">
    <source>
        <dbReference type="PDB" id="2BZE"/>
    </source>
</evidence>
<evidence type="ECO:0007829" key="15">
    <source>
        <dbReference type="PDB" id="3U1U"/>
    </source>
</evidence>
<evidence type="ECO:0007829" key="16">
    <source>
        <dbReference type="PDB" id="6TED"/>
    </source>
</evidence>